<name>ZSWM3_HUMAN</name>
<gene>
    <name type="primary">ZSWIM3</name>
    <name type="synonym">C20orf164</name>
</gene>
<keyword id="KW-0479">Metal-binding</keyword>
<keyword id="KW-1267">Proteomics identification</keyword>
<keyword id="KW-1185">Reference proteome</keyword>
<keyword id="KW-0862">Zinc</keyword>
<keyword id="KW-0863">Zinc-finger</keyword>
<comment type="interaction">
    <interactant intactId="EBI-5235554">
        <id>Q96MP5</id>
    </interactant>
    <interactant intactId="EBI-10961624">
        <id>Q2TAC2-2</id>
        <label>CCDC57</label>
    </interactant>
    <organismsDiffer>false</organismsDiffer>
    <experiments>3</experiments>
</comment>
<comment type="interaction">
    <interactant intactId="EBI-5235554">
        <id>Q96MP5</id>
    </interactant>
    <interactant intactId="EBI-2548508">
        <id>Q96IK5</id>
        <label>GMCL1</label>
    </interactant>
    <organismsDiffer>false</organismsDiffer>
    <experiments>3</experiments>
</comment>
<comment type="interaction">
    <interactant intactId="EBI-5235554">
        <id>Q96MP5</id>
    </interactant>
    <interactant intactId="EBI-355744">
        <id>Q12933</id>
        <label>TRAF2</label>
    </interactant>
    <organismsDiffer>false</organismsDiffer>
    <experiments>3</experiments>
</comment>
<dbReference type="EMBL" id="AK056641">
    <property type="protein sequence ID" value="BAB71239.1"/>
    <property type="molecule type" value="mRNA"/>
</dbReference>
<dbReference type="EMBL" id="AL008726">
    <property type="status" value="NOT_ANNOTATED_CDS"/>
    <property type="molecule type" value="Genomic_DNA"/>
</dbReference>
<dbReference type="EMBL" id="BC027611">
    <property type="protein sequence ID" value="AAH27611.1"/>
    <property type="molecule type" value="mRNA"/>
</dbReference>
<dbReference type="CCDS" id="CCDS13381.1"/>
<dbReference type="RefSeq" id="NP_542790.2">
    <property type="nucleotide sequence ID" value="NM_080752.4"/>
</dbReference>
<dbReference type="SMR" id="Q96MP5"/>
<dbReference type="BioGRID" id="126724">
    <property type="interactions" value="5"/>
</dbReference>
<dbReference type="FunCoup" id="Q96MP5">
    <property type="interactions" value="352"/>
</dbReference>
<dbReference type="IntAct" id="Q96MP5">
    <property type="interactions" value="4"/>
</dbReference>
<dbReference type="STRING" id="9606.ENSP00000255152"/>
<dbReference type="GlyGen" id="Q96MP5">
    <property type="glycosylation" value="1 site, 1 O-linked glycan (1 site)"/>
</dbReference>
<dbReference type="iPTMnet" id="Q96MP5"/>
<dbReference type="PhosphoSitePlus" id="Q96MP5"/>
<dbReference type="BioMuta" id="ZSWIM3"/>
<dbReference type="DMDM" id="41019518"/>
<dbReference type="jPOST" id="Q96MP5"/>
<dbReference type="MassIVE" id="Q96MP5"/>
<dbReference type="PaxDb" id="9606-ENSP00000255152"/>
<dbReference type="PeptideAtlas" id="Q96MP5"/>
<dbReference type="ProteomicsDB" id="77384"/>
<dbReference type="Antibodypedia" id="43809">
    <property type="antibodies" value="61 antibodies from 13 providers"/>
</dbReference>
<dbReference type="DNASU" id="140831"/>
<dbReference type="Ensembl" id="ENST00000255152.3">
    <property type="protein sequence ID" value="ENSP00000255152.2"/>
    <property type="gene ID" value="ENSG00000132801.7"/>
</dbReference>
<dbReference type="GeneID" id="140831"/>
<dbReference type="KEGG" id="hsa:140831"/>
<dbReference type="MANE-Select" id="ENST00000255152.3">
    <property type="protein sequence ID" value="ENSP00000255152.2"/>
    <property type="RefSeq nucleotide sequence ID" value="NM_080752.4"/>
    <property type="RefSeq protein sequence ID" value="NP_542790.2"/>
</dbReference>
<dbReference type="UCSC" id="uc002xqd.4">
    <property type="organism name" value="human"/>
</dbReference>
<dbReference type="AGR" id="HGNC:16157"/>
<dbReference type="CTD" id="140831"/>
<dbReference type="DisGeNET" id="140831"/>
<dbReference type="GeneCards" id="ZSWIM3"/>
<dbReference type="HGNC" id="HGNC:16157">
    <property type="gene designation" value="ZSWIM3"/>
</dbReference>
<dbReference type="HPA" id="ENSG00000132801">
    <property type="expression patterns" value="Low tissue specificity"/>
</dbReference>
<dbReference type="MIM" id="620336">
    <property type="type" value="gene"/>
</dbReference>
<dbReference type="neXtProt" id="NX_Q96MP5"/>
<dbReference type="OpenTargets" id="ENSG00000132801"/>
<dbReference type="PharmGKB" id="PA25706"/>
<dbReference type="VEuPathDB" id="HostDB:ENSG00000132801"/>
<dbReference type="eggNOG" id="ENOG502QVJ3">
    <property type="taxonomic scope" value="Eukaryota"/>
</dbReference>
<dbReference type="GeneTree" id="ENSGT00390000017273"/>
<dbReference type="HOGENOM" id="CLU_398444_0_0_1"/>
<dbReference type="InParanoid" id="Q96MP5"/>
<dbReference type="OMA" id="LNTQHVH"/>
<dbReference type="OrthoDB" id="124789at2759"/>
<dbReference type="PAN-GO" id="Q96MP5">
    <property type="GO annotations" value="0 GO annotations based on evolutionary models"/>
</dbReference>
<dbReference type="PhylomeDB" id="Q96MP5"/>
<dbReference type="TreeFam" id="TF335703"/>
<dbReference type="PathwayCommons" id="Q96MP5"/>
<dbReference type="SignaLink" id="Q96MP5"/>
<dbReference type="BioGRID-ORCS" id="140831">
    <property type="hits" value="11 hits in 1155 CRISPR screens"/>
</dbReference>
<dbReference type="ChiTaRS" id="ZSWIM3">
    <property type="organism name" value="human"/>
</dbReference>
<dbReference type="GenomeRNAi" id="140831"/>
<dbReference type="Pharos" id="Q96MP5">
    <property type="development level" value="Tdark"/>
</dbReference>
<dbReference type="PRO" id="PR:Q96MP5"/>
<dbReference type="Proteomes" id="UP000005640">
    <property type="component" value="Chromosome 20"/>
</dbReference>
<dbReference type="RNAct" id="Q96MP5">
    <property type="molecule type" value="protein"/>
</dbReference>
<dbReference type="Bgee" id="ENSG00000132801">
    <property type="expression patterns" value="Expressed in oocyte and 148 other cell types or tissues"/>
</dbReference>
<dbReference type="GO" id="GO:0008270">
    <property type="term" value="F:zinc ion binding"/>
    <property type="evidence" value="ECO:0007669"/>
    <property type="project" value="UniProtKB-KW"/>
</dbReference>
<dbReference type="InterPro" id="IPR052579">
    <property type="entry name" value="Zinc_finger_SWIM"/>
</dbReference>
<dbReference type="InterPro" id="IPR006564">
    <property type="entry name" value="Znf_PMZ"/>
</dbReference>
<dbReference type="InterPro" id="IPR007527">
    <property type="entry name" value="Znf_SWIM"/>
</dbReference>
<dbReference type="InterPro" id="IPR048326">
    <property type="entry name" value="ZSWIM1-3_helical"/>
</dbReference>
<dbReference type="InterPro" id="IPR048324">
    <property type="entry name" value="ZSWIM1-3_RNaseH-like"/>
</dbReference>
<dbReference type="InterPro" id="IPR045563">
    <property type="entry name" value="ZSWIM1/3_C"/>
</dbReference>
<dbReference type="InterPro" id="IPR048325">
    <property type="entry name" value="ZSWIM3_N"/>
</dbReference>
<dbReference type="PANTHER" id="PTHR31569">
    <property type="entry name" value="SWIM-TYPE DOMAIN-CONTAINING PROTEIN"/>
    <property type="match status" value="1"/>
</dbReference>
<dbReference type="PANTHER" id="PTHR31569:SF3">
    <property type="entry name" value="ZINC FINGER SWIM DOMAIN-CONTAINING PROTEIN 3"/>
    <property type="match status" value="1"/>
</dbReference>
<dbReference type="Pfam" id="PF04434">
    <property type="entry name" value="SWIM"/>
    <property type="match status" value="1"/>
</dbReference>
<dbReference type="Pfam" id="PF19286">
    <property type="entry name" value="ZSWIM1-3_C"/>
    <property type="match status" value="1"/>
</dbReference>
<dbReference type="Pfam" id="PF21600">
    <property type="entry name" value="ZSWIM1-3_helical"/>
    <property type="match status" value="1"/>
</dbReference>
<dbReference type="Pfam" id="PF21056">
    <property type="entry name" value="ZSWIM1-3_RNaseH-like"/>
    <property type="match status" value="1"/>
</dbReference>
<dbReference type="Pfam" id="PF21599">
    <property type="entry name" value="ZSWIM3_N"/>
    <property type="match status" value="1"/>
</dbReference>
<dbReference type="SMART" id="SM00575">
    <property type="entry name" value="ZnF_PMZ"/>
    <property type="match status" value="1"/>
</dbReference>
<dbReference type="PROSITE" id="PS50966">
    <property type="entry name" value="ZF_SWIM"/>
    <property type="match status" value="1"/>
</dbReference>
<feature type="chain" id="PRO_0000223099" description="Zinc finger SWIM domain-containing protein 3">
    <location>
        <begin position="1"/>
        <end position="696"/>
    </location>
</feature>
<feature type="zinc finger region" description="SWIM-type" evidence="1">
    <location>
        <begin position="531"/>
        <end position="572"/>
    </location>
</feature>
<feature type="sequence variant" id="VAR_053769" description="In dbSNP:rs2903808." evidence="2">
    <original>V</original>
    <variation>A</variation>
    <location>
        <position position="259"/>
    </location>
</feature>
<feature type="sequence variant" id="VAR_062161" description="In dbSNP:rs35928298.">
    <original>R</original>
    <variation>W</variation>
    <location>
        <position position="291"/>
    </location>
</feature>
<feature type="sequence conflict" description="In Ref. 1; BAB71239." evidence="3" ref="1">
    <original>R</original>
    <variation>S</variation>
    <location>
        <position position="329"/>
    </location>
</feature>
<proteinExistence type="evidence at protein level"/>
<reference key="1">
    <citation type="journal article" date="2004" name="Nat. Genet.">
        <title>Complete sequencing and characterization of 21,243 full-length human cDNAs.</title>
        <authorList>
            <person name="Ota T."/>
            <person name="Suzuki Y."/>
            <person name="Nishikawa T."/>
            <person name="Otsuki T."/>
            <person name="Sugiyama T."/>
            <person name="Irie R."/>
            <person name="Wakamatsu A."/>
            <person name="Hayashi K."/>
            <person name="Sato H."/>
            <person name="Nagai K."/>
            <person name="Kimura K."/>
            <person name="Makita H."/>
            <person name="Sekine M."/>
            <person name="Obayashi M."/>
            <person name="Nishi T."/>
            <person name="Shibahara T."/>
            <person name="Tanaka T."/>
            <person name="Ishii S."/>
            <person name="Yamamoto J."/>
            <person name="Saito K."/>
            <person name="Kawai Y."/>
            <person name="Isono Y."/>
            <person name="Nakamura Y."/>
            <person name="Nagahari K."/>
            <person name="Murakami K."/>
            <person name="Yasuda T."/>
            <person name="Iwayanagi T."/>
            <person name="Wagatsuma M."/>
            <person name="Shiratori A."/>
            <person name="Sudo H."/>
            <person name="Hosoiri T."/>
            <person name="Kaku Y."/>
            <person name="Kodaira H."/>
            <person name="Kondo H."/>
            <person name="Sugawara M."/>
            <person name="Takahashi M."/>
            <person name="Kanda K."/>
            <person name="Yokoi T."/>
            <person name="Furuya T."/>
            <person name="Kikkawa E."/>
            <person name="Omura Y."/>
            <person name="Abe K."/>
            <person name="Kamihara K."/>
            <person name="Katsuta N."/>
            <person name="Sato K."/>
            <person name="Tanikawa M."/>
            <person name="Yamazaki M."/>
            <person name="Ninomiya K."/>
            <person name="Ishibashi T."/>
            <person name="Yamashita H."/>
            <person name="Murakawa K."/>
            <person name="Fujimori K."/>
            <person name="Tanai H."/>
            <person name="Kimata M."/>
            <person name="Watanabe M."/>
            <person name="Hiraoka S."/>
            <person name="Chiba Y."/>
            <person name="Ishida S."/>
            <person name="Ono Y."/>
            <person name="Takiguchi S."/>
            <person name="Watanabe S."/>
            <person name="Yosida M."/>
            <person name="Hotuta T."/>
            <person name="Kusano J."/>
            <person name="Kanehori K."/>
            <person name="Takahashi-Fujii A."/>
            <person name="Hara H."/>
            <person name="Tanase T.-O."/>
            <person name="Nomura Y."/>
            <person name="Togiya S."/>
            <person name="Komai F."/>
            <person name="Hara R."/>
            <person name="Takeuchi K."/>
            <person name="Arita M."/>
            <person name="Imose N."/>
            <person name="Musashino K."/>
            <person name="Yuuki H."/>
            <person name="Oshima A."/>
            <person name="Sasaki N."/>
            <person name="Aotsuka S."/>
            <person name="Yoshikawa Y."/>
            <person name="Matsunawa H."/>
            <person name="Ichihara T."/>
            <person name="Shiohata N."/>
            <person name="Sano S."/>
            <person name="Moriya S."/>
            <person name="Momiyama H."/>
            <person name="Satoh N."/>
            <person name="Takami S."/>
            <person name="Terashima Y."/>
            <person name="Suzuki O."/>
            <person name="Nakagawa S."/>
            <person name="Senoh A."/>
            <person name="Mizoguchi H."/>
            <person name="Goto Y."/>
            <person name="Shimizu F."/>
            <person name="Wakebe H."/>
            <person name="Hishigaki H."/>
            <person name="Watanabe T."/>
            <person name="Sugiyama A."/>
            <person name="Takemoto M."/>
            <person name="Kawakami B."/>
            <person name="Yamazaki M."/>
            <person name="Watanabe K."/>
            <person name="Kumagai A."/>
            <person name="Itakura S."/>
            <person name="Fukuzumi Y."/>
            <person name="Fujimori Y."/>
            <person name="Komiyama M."/>
            <person name="Tashiro H."/>
            <person name="Tanigami A."/>
            <person name="Fujiwara T."/>
            <person name="Ono T."/>
            <person name="Yamada K."/>
            <person name="Fujii Y."/>
            <person name="Ozaki K."/>
            <person name="Hirao M."/>
            <person name="Ohmori Y."/>
            <person name="Kawabata A."/>
            <person name="Hikiji T."/>
            <person name="Kobatake N."/>
            <person name="Inagaki H."/>
            <person name="Ikema Y."/>
            <person name="Okamoto S."/>
            <person name="Okitani R."/>
            <person name="Kawakami T."/>
            <person name="Noguchi S."/>
            <person name="Itoh T."/>
            <person name="Shigeta K."/>
            <person name="Senba T."/>
            <person name="Matsumura K."/>
            <person name="Nakajima Y."/>
            <person name="Mizuno T."/>
            <person name="Morinaga M."/>
            <person name="Sasaki M."/>
            <person name="Togashi T."/>
            <person name="Oyama M."/>
            <person name="Hata H."/>
            <person name="Watanabe M."/>
            <person name="Komatsu T."/>
            <person name="Mizushima-Sugano J."/>
            <person name="Satoh T."/>
            <person name="Shirai Y."/>
            <person name="Takahashi Y."/>
            <person name="Nakagawa K."/>
            <person name="Okumura K."/>
            <person name="Nagase T."/>
            <person name="Nomura N."/>
            <person name="Kikuchi H."/>
            <person name="Masuho Y."/>
            <person name="Yamashita R."/>
            <person name="Nakai K."/>
            <person name="Yada T."/>
            <person name="Nakamura Y."/>
            <person name="Ohara O."/>
            <person name="Isogai T."/>
            <person name="Sugano S."/>
        </authorList>
    </citation>
    <scope>NUCLEOTIDE SEQUENCE [LARGE SCALE MRNA]</scope>
    <scope>VARIANT ALA-259</scope>
    <source>
        <tissue>Fetal brain</tissue>
    </source>
</reference>
<reference key="2">
    <citation type="journal article" date="2001" name="Nature">
        <title>The DNA sequence and comparative analysis of human chromosome 20.</title>
        <authorList>
            <person name="Deloukas P."/>
            <person name="Matthews L.H."/>
            <person name="Ashurst J.L."/>
            <person name="Burton J."/>
            <person name="Gilbert J.G.R."/>
            <person name="Jones M."/>
            <person name="Stavrides G."/>
            <person name="Almeida J.P."/>
            <person name="Babbage A.K."/>
            <person name="Bagguley C.L."/>
            <person name="Bailey J."/>
            <person name="Barlow K.F."/>
            <person name="Bates K.N."/>
            <person name="Beard L.M."/>
            <person name="Beare D.M."/>
            <person name="Beasley O.P."/>
            <person name="Bird C.P."/>
            <person name="Blakey S.E."/>
            <person name="Bridgeman A.M."/>
            <person name="Brown A.J."/>
            <person name="Buck D."/>
            <person name="Burrill W.D."/>
            <person name="Butler A.P."/>
            <person name="Carder C."/>
            <person name="Carter N.P."/>
            <person name="Chapman J.C."/>
            <person name="Clamp M."/>
            <person name="Clark G."/>
            <person name="Clark L.N."/>
            <person name="Clark S.Y."/>
            <person name="Clee C.M."/>
            <person name="Clegg S."/>
            <person name="Cobley V.E."/>
            <person name="Collier R.E."/>
            <person name="Connor R.E."/>
            <person name="Corby N.R."/>
            <person name="Coulson A."/>
            <person name="Coville G.J."/>
            <person name="Deadman R."/>
            <person name="Dhami P.D."/>
            <person name="Dunn M."/>
            <person name="Ellington A.G."/>
            <person name="Frankland J.A."/>
            <person name="Fraser A."/>
            <person name="French L."/>
            <person name="Garner P."/>
            <person name="Grafham D.V."/>
            <person name="Griffiths C."/>
            <person name="Griffiths M.N.D."/>
            <person name="Gwilliam R."/>
            <person name="Hall R.E."/>
            <person name="Hammond S."/>
            <person name="Harley J.L."/>
            <person name="Heath P.D."/>
            <person name="Ho S."/>
            <person name="Holden J.L."/>
            <person name="Howden P.J."/>
            <person name="Huckle E."/>
            <person name="Hunt A.R."/>
            <person name="Hunt S.E."/>
            <person name="Jekosch K."/>
            <person name="Johnson C.M."/>
            <person name="Johnson D."/>
            <person name="Kay M.P."/>
            <person name="Kimberley A.M."/>
            <person name="King A."/>
            <person name="Knights A."/>
            <person name="Laird G.K."/>
            <person name="Lawlor S."/>
            <person name="Lehvaeslaiho M.H."/>
            <person name="Leversha M.A."/>
            <person name="Lloyd C."/>
            <person name="Lloyd D.M."/>
            <person name="Lovell J.D."/>
            <person name="Marsh V.L."/>
            <person name="Martin S.L."/>
            <person name="McConnachie L.J."/>
            <person name="McLay K."/>
            <person name="McMurray A.A."/>
            <person name="Milne S.A."/>
            <person name="Mistry D."/>
            <person name="Moore M.J.F."/>
            <person name="Mullikin J.C."/>
            <person name="Nickerson T."/>
            <person name="Oliver K."/>
            <person name="Parker A."/>
            <person name="Patel R."/>
            <person name="Pearce T.A.V."/>
            <person name="Peck A.I."/>
            <person name="Phillimore B.J.C.T."/>
            <person name="Prathalingam S.R."/>
            <person name="Plumb R.W."/>
            <person name="Ramsay H."/>
            <person name="Rice C.M."/>
            <person name="Ross M.T."/>
            <person name="Scott C.E."/>
            <person name="Sehra H.K."/>
            <person name="Shownkeen R."/>
            <person name="Sims S."/>
            <person name="Skuce C.D."/>
            <person name="Smith M.L."/>
            <person name="Soderlund C."/>
            <person name="Steward C.A."/>
            <person name="Sulston J.E."/>
            <person name="Swann R.M."/>
            <person name="Sycamore N."/>
            <person name="Taylor R."/>
            <person name="Tee L."/>
            <person name="Thomas D.W."/>
            <person name="Thorpe A."/>
            <person name="Tracey A."/>
            <person name="Tromans A.C."/>
            <person name="Vaudin M."/>
            <person name="Wall M."/>
            <person name="Wallis J.M."/>
            <person name="Whitehead S.L."/>
            <person name="Whittaker P."/>
            <person name="Willey D.L."/>
            <person name="Williams L."/>
            <person name="Williams S.A."/>
            <person name="Wilming L."/>
            <person name="Wray P.W."/>
            <person name="Hubbard T."/>
            <person name="Durbin R.M."/>
            <person name="Bentley D.R."/>
            <person name="Beck S."/>
            <person name="Rogers J."/>
        </authorList>
    </citation>
    <scope>NUCLEOTIDE SEQUENCE [LARGE SCALE GENOMIC DNA]</scope>
</reference>
<reference key="3">
    <citation type="journal article" date="2004" name="Genome Res.">
        <title>The status, quality, and expansion of the NIH full-length cDNA project: the Mammalian Gene Collection (MGC).</title>
        <authorList>
            <consortium name="The MGC Project Team"/>
        </authorList>
    </citation>
    <scope>NUCLEOTIDE SEQUENCE [LARGE SCALE MRNA]</scope>
    <source>
        <tissue>Testis</tissue>
    </source>
</reference>
<accession>Q96MP5</accession>
<accession>Q9BR13</accession>
<sequence length="696" mass="79454">MELGSCFKTYEDFKECFSAYKRENRCSFILRDCVSVRFHNLNHGTSIREDILYVQVKFVCIRTQSNRKRTREADMCPAYLLLRYNERLDRLFISELNTQHIHGDSKVASPGGDTTGKSQKTMCLQRLQPVQPTTKKDLDTAEKSLVEPSFCLDKVQVSSKPEQEGITPSDLAKIAKVMKNFLKVDEGSMASFSVGDSQHLDRLSFQSSKMTDLFIRFPENLLLHRVENTQGHILYAFLVENKERESRVVHFAVLKAETVTSVAKMLSIFTEFNSDWPKVKVVFVDPSFHYRAILQEIFPAARILLSIYHTTRLLEKKLHRSSANPSFKRLMKEALREAVFVTSEASLKNLCQMSQAVLDEDLFNFLQAHWFTCELLWYMHVRKGLLACNTYMDSLDIVTSKVSSLFREQQSLLDCILCFVDYIDFFNTKGLKNLPTPPPKLKRARPASMPLKSKKAFGICGESLTSLPAEETKPDAQQVQVQQQSQVPPSQVGMLDTLHQSGSELAYKLCHNEWEVVQNSTHLVDMAGSSVDVQLLEDSHQVSKDGCSCSCSFQQWYHLPCRHILALLHTSQQPVGEAMVCRRWQKKYQYLLGPNGELQDRGMVPNTGQPEKQGRNDMIQDLSRELANLLMQTEGPELEERYSTLRKIVDIWAGPSQPSELFQQPGDFKDVGRLPFLWGKQEEGEGFPPATAVMHY</sequence>
<organism>
    <name type="scientific">Homo sapiens</name>
    <name type="common">Human</name>
    <dbReference type="NCBI Taxonomy" id="9606"/>
    <lineage>
        <taxon>Eukaryota</taxon>
        <taxon>Metazoa</taxon>
        <taxon>Chordata</taxon>
        <taxon>Craniata</taxon>
        <taxon>Vertebrata</taxon>
        <taxon>Euteleostomi</taxon>
        <taxon>Mammalia</taxon>
        <taxon>Eutheria</taxon>
        <taxon>Euarchontoglires</taxon>
        <taxon>Primates</taxon>
        <taxon>Haplorrhini</taxon>
        <taxon>Catarrhini</taxon>
        <taxon>Hominidae</taxon>
        <taxon>Homo</taxon>
    </lineage>
</organism>
<protein>
    <recommendedName>
        <fullName>Zinc finger SWIM domain-containing protein 3</fullName>
    </recommendedName>
</protein>
<evidence type="ECO:0000255" key="1">
    <source>
        <dbReference type="PROSITE-ProRule" id="PRU00325"/>
    </source>
</evidence>
<evidence type="ECO:0000269" key="2">
    <source>
    </source>
</evidence>
<evidence type="ECO:0000305" key="3"/>